<protein>
    <recommendedName>
        <fullName>Iron-regulated surface determinant protein H</fullName>
    </recommendedName>
    <alternativeName>
        <fullName>Haptoglobin receptor A</fullName>
    </alternativeName>
    <alternativeName>
        <fullName>Staphylococcus aureus surface protein I</fullName>
    </alternativeName>
</protein>
<comment type="function">
    <text evidence="1">Binds human plasma haptoglobin-hemoglobin complexes, haptoglobin and hemoglobin. Binds haptoglobin-hemoglobin complexes with significantly higher affinity than haptoglobin alone (By similarity).</text>
</comment>
<comment type="subcellular location">
    <subcellularLocation>
        <location evidence="6">Secreted</location>
        <location evidence="6">Cell wall</location>
        <topology evidence="6">Peptidoglycan-anchor</topology>
    </subcellularLocation>
</comment>
<comment type="domain">
    <text evidence="1">The NEAT 1 domain binds with higher affinity than the NEAT 2 domain haptoglobin-hemoglobin complexes, haptoglobin and hemoglobin.</text>
</comment>
<comment type="similarity">
    <text evidence="6">Belongs to the IsdH family.</text>
</comment>
<comment type="sequence caution" evidence="6">
    <conflict type="erroneous termination">
        <sequence resource="EMBL-CDS" id="CAI81279"/>
    </conflict>
    <text>Truncated C-terminus.</text>
</comment>
<comment type="sequence caution" evidence="6">
    <conflict type="erroneous termination">
        <sequence resource="EMBL-CDS" id="CAI81280"/>
    </conflict>
    <text>Truncated C-terminus.</text>
</comment>
<proteinExistence type="inferred from homology"/>
<sequence>MNKHHPKLRSFYSIRKSTLGVASVIVSTLFLITSQHQAQAAENTNTSDKISENQNSNATTTQPPKDTNQTQPATQPANTAKTYPAADESLKDAIKNPAVENKEHDIGPREQVNFLLLDKNNETQYYHFFSIKDPADVYYTKKKAEVELDINTASTWKKFEVYENNQKLPVRLVSYSPVPEDHAYIRFPVSDGTQELKIVSSTQIDDGAETNYDYTKLVFAKPIYNDPSLVKSDTNDAVATNDQSSSDASNQTNTNTSNQNTSTTNNTSDQPQATTNMSQPAQPKLSANADQASSQPAHETNSNGNTNDKTNESSNQSDVNQQYPPADESLQDAIKNPAIIDKEHTADNWRPIDFQMKNDKGERQFYHYASTVEPATVIFTKTGPIIELGLKTALTWKKLEVYEGDKKLPVELVSYDSDKDYAYIRFPVSNGTREVKIVSSIEYGENIHEDYDYTLMVFAQPITNNPDDYVDEETYNLQKLLAPYHKAKTLERQVYELEKLQEKLPEKYKAEYKKKLDQTRVELADQVKSAVTEFENVTPTNDQLTDVQEAHFVVFESEENNESVMDGFVEHPFYTATLNGQKYVVMKTKDDSYWKDLIVEGKRVTTVSKDTKNNSRTLIFPYIPDKAVYNAIVKVVVANIGYEGQYHVRIINQDIKTKDDDTSQNNTSEHLNGQTVQEDNVTATDTATNNSIETTPREATDKVDLIEPESDMVKDADSSVDKDAHHDVDHLSDMSGNTHFDKYDLKEMDTQIAKDTDKGVDNSVGMSSNVDTDKDSNKNKDKVIQLDHIADKNKVNNTGTETNIDTMKYHPISTIKVTDKKTTEHLPSDIHKTVDKTVKTKEKASTPSKENKLSQSKMLPKTGETTSSQSWWSLYALLGMLALFIPKFRKESK</sequence>
<reference key="1">
    <citation type="journal article" date="2007" name="PLoS ONE">
        <title>Molecular correlates of host specialization in Staphylococcus aureus.</title>
        <authorList>
            <person name="Herron-Olson L."/>
            <person name="Fitzgerald J.R."/>
            <person name="Musser J.M."/>
            <person name="Kapur V."/>
        </authorList>
    </citation>
    <scope>NUCLEOTIDE SEQUENCE [LARGE SCALE GENOMIC DNA]</scope>
    <source>
        <strain>bovine RF122 / ET3-1</strain>
    </source>
</reference>
<gene>
    <name type="primary">isdH</name>
    <name type="synonym">harA</name>
    <name type="synonym">sasI</name>
    <name type="ordered locus">SAB1591c/SAB1590c</name>
</gene>
<evidence type="ECO:0000250" key="1"/>
<evidence type="ECO:0000255" key="2"/>
<evidence type="ECO:0000255" key="3">
    <source>
        <dbReference type="PROSITE-ProRule" id="PRU00337"/>
    </source>
</evidence>
<evidence type="ECO:0000255" key="4">
    <source>
        <dbReference type="PROSITE-ProRule" id="PRU00477"/>
    </source>
</evidence>
<evidence type="ECO:0000256" key="5">
    <source>
        <dbReference type="SAM" id="MobiDB-lite"/>
    </source>
</evidence>
<evidence type="ECO:0000305" key="6"/>
<dbReference type="EMBL" id="AJ938182">
    <property type="protein sequence ID" value="CAI81279.1"/>
    <property type="status" value="ALT_SEQ"/>
    <property type="molecule type" value="Genomic_DNA"/>
</dbReference>
<dbReference type="EMBL" id="AJ938182">
    <property type="protein sequence ID" value="CAI81280.1"/>
    <property type="status" value="ALT_SEQ"/>
    <property type="molecule type" value="Genomic_DNA"/>
</dbReference>
<dbReference type="BMRB" id="Q2YTF7"/>
<dbReference type="SMR" id="Q2YTF7"/>
<dbReference type="KEGG" id="sab:SAB1590c"/>
<dbReference type="KEGG" id="sab:SAB1591c"/>
<dbReference type="HOGENOM" id="CLU_016167_1_0_9"/>
<dbReference type="GO" id="GO:0005576">
    <property type="term" value="C:extracellular region"/>
    <property type="evidence" value="ECO:0007669"/>
    <property type="project" value="UniProtKB-KW"/>
</dbReference>
<dbReference type="GO" id="GO:0020037">
    <property type="term" value="F:heme binding"/>
    <property type="evidence" value="ECO:0007669"/>
    <property type="project" value="InterPro"/>
</dbReference>
<dbReference type="CDD" id="cd06920">
    <property type="entry name" value="NEAT"/>
    <property type="match status" value="1"/>
</dbReference>
<dbReference type="Gene3D" id="1.20.58.1270">
    <property type="match status" value="1"/>
</dbReference>
<dbReference type="Gene3D" id="2.60.40.1850">
    <property type="match status" value="3"/>
</dbReference>
<dbReference type="InterPro" id="IPR048652">
    <property type="entry name" value="Isd_H_B_linker"/>
</dbReference>
<dbReference type="InterPro" id="IPR050436">
    <property type="entry name" value="IsdA"/>
</dbReference>
<dbReference type="InterPro" id="IPR019930">
    <property type="entry name" value="IsdH"/>
</dbReference>
<dbReference type="InterPro" id="IPR019931">
    <property type="entry name" value="LPXTG_anchor"/>
</dbReference>
<dbReference type="InterPro" id="IPR006635">
    <property type="entry name" value="NEAT_dom"/>
</dbReference>
<dbReference type="InterPro" id="IPR037250">
    <property type="entry name" value="NEAT_dom_sf"/>
</dbReference>
<dbReference type="InterPro" id="IPR005877">
    <property type="entry name" value="YSIRK_signal_dom"/>
</dbReference>
<dbReference type="NCBIfam" id="TIGR03658">
    <property type="entry name" value="IsdH_HarA"/>
    <property type="match status" value="1"/>
</dbReference>
<dbReference type="NCBIfam" id="TIGR01167">
    <property type="entry name" value="LPXTG_anchor"/>
    <property type="match status" value="1"/>
</dbReference>
<dbReference type="NCBIfam" id="TIGR01168">
    <property type="entry name" value="YSIRK_signal"/>
    <property type="match status" value="1"/>
</dbReference>
<dbReference type="PANTHER" id="PTHR37824">
    <property type="entry name" value="IRON-REGULATED SURFACE DETERMINANT PROTEIN C"/>
    <property type="match status" value="1"/>
</dbReference>
<dbReference type="PANTHER" id="PTHR37824:SF1">
    <property type="entry name" value="IRON-REGULATED SURFACE DETERMINANT PROTEIN C"/>
    <property type="match status" value="1"/>
</dbReference>
<dbReference type="Pfam" id="PF20861">
    <property type="entry name" value="Isd_H_B_linker"/>
    <property type="match status" value="1"/>
</dbReference>
<dbReference type="Pfam" id="PF05031">
    <property type="entry name" value="NEAT"/>
    <property type="match status" value="3"/>
</dbReference>
<dbReference type="Pfam" id="PF04650">
    <property type="entry name" value="YSIRK_signal"/>
    <property type="match status" value="1"/>
</dbReference>
<dbReference type="SMART" id="SM00725">
    <property type="entry name" value="NEAT"/>
    <property type="match status" value="3"/>
</dbReference>
<dbReference type="SUPFAM" id="SSF158911">
    <property type="entry name" value="NEAT domain-like"/>
    <property type="match status" value="3"/>
</dbReference>
<dbReference type="PROSITE" id="PS50847">
    <property type="entry name" value="GRAM_POS_ANCHORING"/>
    <property type="match status" value="1"/>
</dbReference>
<dbReference type="PROSITE" id="PS50978">
    <property type="entry name" value="NEAT"/>
    <property type="match status" value="3"/>
</dbReference>
<feature type="signal peptide" evidence="2">
    <location>
        <begin position="1"/>
        <end position="40"/>
    </location>
</feature>
<feature type="chain" id="PRO_0000285181" description="Iron-regulated surface determinant protein H">
    <location>
        <begin position="41"/>
        <end position="862"/>
    </location>
</feature>
<feature type="propeptide" id="PRO_0000285182" description="Removed by sortase" evidence="4">
    <location>
        <begin position="863"/>
        <end position="893"/>
    </location>
</feature>
<feature type="domain" description="NEAT 1" evidence="3">
    <location>
        <begin position="105"/>
        <end position="232"/>
    </location>
</feature>
<feature type="domain" description="NEAT 2" evidence="3">
    <location>
        <begin position="345"/>
        <end position="471"/>
    </location>
</feature>
<feature type="domain" description="NEAT 3" evidence="3">
    <location>
        <begin position="543"/>
        <end position="660"/>
    </location>
</feature>
<feature type="region of interest" description="Disordered" evidence="5">
    <location>
        <begin position="42"/>
        <end position="84"/>
    </location>
</feature>
<feature type="region of interest" description="Disordered" evidence="5">
    <location>
        <begin position="226"/>
        <end position="324"/>
    </location>
</feature>
<feature type="region of interest" description="Disordered" evidence="5">
    <location>
        <begin position="658"/>
        <end position="696"/>
    </location>
</feature>
<feature type="region of interest" description="Disordered" evidence="5">
    <location>
        <begin position="713"/>
        <end position="733"/>
    </location>
</feature>
<feature type="region of interest" description="Disordered" evidence="5">
    <location>
        <begin position="754"/>
        <end position="778"/>
    </location>
</feature>
<feature type="region of interest" description="Disordered" evidence="5">
    <location>
        <begin position="837"/>
        <end position="865"/>
    </location>
</feature>
<feature type="short sequence motif" description="LPXTG sorting signal" evidence="4">
    <location>
        <begin position="859"/>
        <end position="863"/>
    </location>
</feature>
<feature type="compositionally biased region" description="Polar residues" evidence="5">
    <location>
        <begin position="42"/>
        <end position="81"/>
    </location>
</feature>
<feature type="compositionally biased region" description="Low complexity" evidence="5">
    <location>
        <begin position="239"/>
        <end position="270"/>
    </location>
</feature>
<feature type="compositionally biased region" description="Polar residues" evidence="5">
    <location>
        <begin position="271"/>
        <end position="281"/>
    </location>
</feature>
<feature type="compositionally biased region" description="Polar residues" evidence="5">
    <location>
        <begin position="288"/>
        <end position="323"/>
    </location>
</feature>
<feature type="compositionally biased region" description="Polar residues" evidence="5">
    <location>
        <begin position="663"/>
        <end position="678"/>
    </location>
</feature>
<feature type="compositionally biased region" description="Low complexity" evidence="5">
    <location>
        <begin position="679"/>
        <end position="690"/>
    </location>
</feature>
<feature type="compositionally biased region" description="Basic and acidic residues" evidence="5">
    <location>
        <begin position="713"/>
        <end position="732"/>
    </location>
</feature>
<feature type="compositionally biased region" description="Basic and acidic residues" evidence="5">
    <location>
        <begin position="837"/>
        <end position="852"/>
    </location>
</feature>
<feature type="compositionally biased region" description="Polar residues" evidence="5">
    <location>
        <begin position="853"/>
        <end position="865"/>
    </location>
</feature>
<feature type="modified residue" description="Pentaglycyl murein peptidoglycan amidated threonine" evidence="4">
    <location>
        <position position="862"/>
    </location>
</feature>
<accession>Q2YTF7</accession>
<accession>Q2YTF8</accession>
<keyword id="KW-0134">Cell wall</keyword>
<keyword id="KW-0572">Peptidoglycan-anchor</keyword>
<keyword id="KW-0677">Repeat</keyword>
<keyword id="KW-0964">Secreted</keyword>
<keyword id="KW-0732">Signal</keyword>
<organism>
    <name type="scientific">Staphylococcus aureus (strain bovine RF122 / ET3-1)</name>
    <dbReference type="NCBI Taxonomy" id="273036"/>
    <lineage>
        <taxon>Bacteria</taxon>
        <taxon>Bacillati</taxon>
        <taxon>Bacillota</taxon>
        <taxon>Bacilli</taxon>
        <taxon>Bacillales</taxon>
        <taxon>Staphylococcaceae</taxon>
        <taxon>Staphylococcus</taxon>
    </lineage>
</organism>
<name>ISDH_STAAB</name>